<evidence type="ECO:0000250" key="1">
    <source>
        <dbReference type="UniProtKB" id="P07902"/>
    </source>
</evidence>
<evidence type="ECO:0000255" key="2">
    <source>
        <dbReference type="PROSITE-ProRule" id="PRU10033"/>
    </source>
</evidence>
<evidence type="ECO:0000256" key="3">
    <source>
        <dbReference type="SAM" id="MobiDB-lite"/>
    </source>
</evidence>
<evidence type="ECO:0000305" key="4"/>
<sequence length="379" mass="43232">MSHSGADPEQRQQASEADAMAATFRASEHQHIRYNPLQDEWVLVSAHRMKRPWQGQVEPQLLKTVPRHDPLNPLCPGATRANGEVNPHYDGTFLFDNDFPALQPDAPDPGPSDHPLFRAEAARGVCKVMCFHPWSDVTLPLMSVPEIRAVIDAWASVTEELGAQYPWVQIFENKGAMMGCSNPHPHCQVWASSFLPDIAQREERSQQTYHSQHGKPLLLEYGHQELLRKERLVLTSEHWIVLVPFWAVWPFQTLLLPRRHVRRLPELNPAERDDLASIMKKLLTKYDNLFETSFPYSMGWHGAPTGLKTGATCDHWQLHAHYYPPLLRSATVRKFMVGYEMLAQAQRDLTPEQAAERLRALPEVHYCLAQKDKETAAIA</sequence>
<gene>
    <name type="primary">Galt</name>
</gene>
<name>GALT_MOUSE</name>
<feature type="chain" id="PRO_0000169883" description="Galactose-1-phosphate uridylyltransferase">
    <location>
        <begin position="1"/>
        <end position="379"/>
    </location>
</feature>
<feature type="region of interest" description="Disordered" evidence="3">
    <location>
        <begin position="1"/>
        <end position="20"/>
    </location>
</feature>
<feature type="compositionally biased region" description="Basic and acidic residues" evidence="3">
    <location>
        <begin position="1"/>
        <end position="10"/>
    </location>
</feature>
<feature type="active site" description="Tele-UMP-histidine intermediate" evidence="2">
    <location>
        <position position="186"/>
    </location>
</feature>
<feature type="binding site" evidence="2">
    <location>
        <position position="75"/>
    </location>
    <ligand>
        <name>Zn(2+)</name>
        <dbReference type="ChEBI" id="CHEBI:29105"/>
        <label>1</label>
    </ligand>
</feature>
<feature type="binding site" description="in other chain" evidence="1">
    <location>
        <position position="81"/>
    </location>
    <ligand>
        <name>UDP-alpha-D-glucose</name>
        <dbReference type="ChEBI" id="CHEBI:58885"/>
        <note>ligand shared between dimeric partners</note>
    </ligand>
</feature>
<feature type="binding site" description="in other chain" evidence="1">
    <location>
        <begin position="97"/>
        <end position="98"/>
    </location>
    <ligand>
        <name>UDP-alpha-D-glucose</name>
        <dbReference type="ChEBI" id="CHEBI:58885"/>
        <note>ligand shared between dimeric partners</note>
    </ligand>
</feature>
<feature type="binding site" evidence="1">
    <location>
        <position position="173"/>
    </location>
    <ligand>
        <name>UDP-alpha-D-glucose</name>
        <dbReference type="ChEBI" id="CHEBI:58885"/>
        <note>ligand shared between dimeric partners</note>
    </ligand>
</feature>
<feature type="binding site" evidence="2">
    <location>
        <position position="184"/>
    </location>
    <ligand>
        <name>Zn(2+)</name>
        <dbReference type="ChEBI" id="CHEBI:29105"/>
        <label>1</label>
    </ligand>
</feature>
<feature type="binding site" description="in other chain" evidence="1">
    <location>
        <position position="188"/>
    </location>
    <ligand>
        <name>UDP-alpha-D-glucose</name>
        <dbReference type="ChEBI" id="CHEBI:58885"/>
        <note>ligand shared between dimeric partners</note>
    </ligand>
</feature>
<feature type="binding site" evidence="1">
    <location>
        <position position="202"/>
    </location>
    <ligand>
        <name>Zn(2+)</name>
        <dbReference type="ChEBI" id="CHEBI:29105"/>
        <label>2</label>
    </ligand>
</feature>
<feature type="binding site" evidence="1">
    <location>
        <position position="301"/>
    </location>
    <ligand>
        <name>Zn(2+)</name>
        <dbReference type="ChEBI" id="CHEBI:29105"/>
        <label>2</label>
    </ligand>
</feature>
<feature type="binding site" evidence="1">
    <location>
        <position position="319"/>
    </location>
    <ligand>
        <name>Zn(2+)</name>
        <dbReference type="ChEBI" id="CHEBI:29105"/>
        <label>2</label>
    </ligand>
</feature>
<feature type="binding site" evidence="1">
    <location>
        <position position="321"/>
    </location>
    <ligand>
        <name>Zn(2+)</name>
        <dbReference type="ChEBI" id="CHEBI:29105"/>
        <label>2</label>
    </ligand>
</feature>
<feature type="binding site" description="in other chain" evidence="1">
    <location>
        <begin position="334"/>
        <end position="337"/>
    </location>
    <ligand>
        <name>UDP-alpha-D-glucose</name>
        <dbReference type="ChEBI" id="CHEBI:58885"/>
        <note>ligand shared between dimeric partners</note>
    </ligand>
</feature>
<feature type="binding site" description="in other chain" evidence="1">
    <location>
        <begin position="339"/>
        <end position="340"/>
    </location>
    <ligand>
        <name>UDP-alpha-D-glucose</name>
        <dbReference type="ChEBI" id="CHEBI:58885"/>
        <note>ligand shared between dimeric partners</note>
    </ligand>
</feature>
<feature type="sequence conflict" description="In Ref. 1; AAA37658 and 2; AAA83562." evidence="4" ref="1 2">
    <original>M</original>
    <variation>T</variation>
    <location>
        <position position="1"/>
    </location>
</feature>
<feature type="sequence conflict" description="In Ref. 1; AAA37658." evidence="4" ref="1">
    <original>G</original>
    <variation>D</variation>
    <location>
        <position position="5"/>
    </location>
</feature>
<feature type="sequence conflict" description="In Ref. 1; AAA37658." evidence="4" ref="1">
    <original>Q</original>
    <variation>H</variation>
    <location>
        <position position="12"/>
    </location>
</feature>
<feature type="sequence conflict" description="In Ref. 1; AAA37658." evidence="4" ref="1">
    <original>Q</original>
    <variation>E</variation>
    <location>
        <position position="13"/>
    </location>
</feature>
<feature type="sequence conflict" description="In Ref. 3; AAH10985." evidence="4" ref="3">
    <original>P</original>
    <variation>T</variation>
    <location>
        <position position="111"/>
    </location>
</feature>
<feature type="sequence conflict" description="In Ref. 1; AAA37658." evidence="4" ref="1">
    <location>
        <position position="274"/>
    </location>
</feature>
<feature type="sequence conflict" description="In Ref. 1; AAA37658." evidence="4" ref="1">
    <original>G</original>
    <variation>GPCTLAAHAHYLPPLLGSATV</variation>
    <location>
        <position position="338"/>
    </location>
</feature>
<feature type="sequence conflict" description="In Ref. 1; AAA37658." evidence="4" ref="1">
    <original>A</original>
    <variation>P</variation>
    <location>
        <position position="355"/>
    </location>
</feature>
<feature type="sequence conflict" description="In Ref. 1; AAA37658." evidence="4" ref="1">
    <original>AIA</original>
    <variation>GSPLLDCDHIRALNLCT</variation>
    <location>
        <begin position="377"/>
        <end position="379"/>
    </location>
</feature>
<reference key="1">
    <citation type="journal article" date="1992" name="Genomics">
        <title>The human galactose-1-phosphate uridyltransferase gene.</title>
        <authorList>
            <person name="Leslie N.D."/>
            <person name="Immerman E.B."/>
            <person name="Flach J.E."/>
            <person name="Florez M."/>
            <person name="Fridovich-Keil J.L."/>
            <person name="Elsas L.J."/>
        </authorList>
    </citation>
    <scope>NUCLEOTIDE SEQUENCE [MRNA]</scope>
</reference>
<reference key="2">
    <citation type="submission" date="1995-12" db="EMBL/GenBank/DDBJ databases">
        <title>Mouse galactose-1-phosphate uridyl transferase (GalT) gene.</title>
        <authorList>
            <person name="Velicescu M."/>
            <person name="Reichardt J.K.V."/>
            <person name="Dubeau L."/>
        </authorList>
    </citation>
    <scope>NUCLEOTIDE SEQUENCE [GENOMIC DNA]</scope>
    <source>
        <strain>C129</strain>
    </source>
</reference>
<reference key="3">
    <citation type="journal article" date="2004" name="Genome Res.">
        <title>The status, quality, and expansion of the NIH full-length cDNA project: the Mammalian Gene Collection (MGC).</title>
        <authorList>
            <consortium name="The MGC Project Team"/>
        </authorList>
    </citation>
    <scope>NUCLEOTIDE SEQUENCE [LARGE SCALE MRNA]</scope>
    <source>
        <tissue>Mammary tumor</tissue>
    </source>
</reference>
<reference key="4">
    <citation type="journal article" date="2010" name="Cell">
        <title>A tissue-specific atlas of mouse protein phosphorylation and expression.</title>
        <authorList>
            <person name="Huttlin E.L."/>
            <person name="Jedrychowski M.P."/>
            <person name="Elias J.E."/>
            <person name="Goswami T."/>
            <person name="Rad R."/>
            <person name="Beausoleil S.A."/>
            <person name="Villen J."/>
            <person name="Haas W."/>
            <person name="Sowa M.E."/>
            <person name="Gygi S.P."/>
        </authorList>
    </citation>
    <scope>IDENTIFICATION BY MASS SPECTROMETRY [LARGE SCALE ANALYSIS]</scope>
    <source>
        <tissue>Liver</tissue>
        <tissue>Lung</tissue>
        <tissue>Spleen</tissue>
    </source>
</reference>
<proteinExistence type="evidence at protein level"/>
<organism>
    <name type="scientific">Mus musculus</name>
    <name type="common">Mouse</name>
    <dbReference type="NCBI Taxonomy" id="10090"/>
    <lineage>
        <taxon>Eukaryota</taxon>
        <taxon>Metazoa</taxon>
        <taxon>Chordata</taxon>
        <taxon>Craniata</taxon>
        <taxon>Vertebrata</taxon>
        <taxon>Euteleostomi</taxon>
        <taxon>Mammalia</taxon>
        <taxon>Eutheria</taxon>
        <taxon>Euarchontoglires</taxon>
        <taxon>Glires</taxon>
        <taxon>Rodentia</taxon>
        <taxon>Myomorpha</taxon>
        <taxon>Muroidea</taxon>
        <taxon>Muridae</taxon>
        <taxon>Murinae</taxon>
        <taxon>Mus</taxon>
        <taxon>Mus</taxon>
    </lineage>
</organism>
<dbReference type="EC" id="2.7.7.12" evidence="1"/>
<dbReference type="EMBL" id="M96265">
    <property type="protein sequence ID" value="AAA37658.1"/>
    <property type="status" value="ALT_FRAME"/>
    <property type="molecule type" value="mRNA"/>
</dbReference>
<dbReference type="EMBL" id="U41282">
    <property type="protein sequence ID" value="AAA83562.1"/>
    <property type="status" value="ALT_INIT"/>
    <property type="molecule type" value="Genomic_DNA"/>
</dbReference>
<dbReference type="EMBL" id="BC010985">
    <property type="protein sequence ID" value="AAH10985.2"/>
    <property type="status" value="ALT_INIT"/>
    <property type="molecule type" value="mRNA"/>
</dbReference>
<dbReference type="RefSeq" id="NP_001382559.1">
    <property type="nucleotide sequence ID" value="NM_001395630.1"/>
</dbReference>
<dbReference type="RefSeq" id="NP_057867.2">
    <property type="nucleotide sequence ID" value="NM_016658.3"/>
</dbReference>
<dbReference type="SMR" id="Q03249"/>
<dbReference type="FunCoup" id="Q03249">
    <property type="interactions" value="899"/>
</dbReference>
<dbReference type="STRING" id="10090.ENSMUSP00000081745"/>
<dbReference type="iPTMnet" id="Q03249"/>
<dbReference type="PhosphoSitePlus" id="Q03249"/>
<dbReference type="jPOST" id="Q03249"/>
<dbReference type="PaxDb" id="10090-ENSMUSP00000081745"/>
<dbReference type="ProteomicsDB" id="268844"/>
<dbReference type="DNASU" id="14430"/>
<dbReference type="GeneID" id="14430"/>
<dbReference type="KEGG" id="mmu:14430"/>
<dbReference type="UCSC" id="uc008sjo.2">
    <property type="organism name" value="mouse"/>
</dbReference>
<dbReference type="AGR" id="MGI:95638"/>
<dbReference type="CTD" id="2592"/>
<dbReference type="MGI" id="MGI:95638">
    <property type="gene designation" value="Galt"/>
</dbReference>
<dbReference type="eggNOG" id="KOG2958">
    <property type="taxonomic scope" value="Eukaryota"/>
</dbReference>
<dbReference type="InParanoid" id="Q03249"/>
<dbReference type="OrthoDB" id="418412at2759"/>
<dbReference type="PhylomeDB" id="Q03249"/>
<dbReference type="BRENDA" id="2.7.7.12">
    <property type="organism ID" value="3474"/>
</dbReference>
<dbReference type="Reactome" id="R-MMU-70370">
    <property type="pathway name" value="Galactose catabolism"/>
</dbReference>
<dbReference type="UniPathway" id="UPA00214"/>
<dbReference type="BioGRID-ORCS" id="14430">
    <property type="hits" value="2 hits in 78 CRISPR screens"/>
</dbReference>
<dbReference type="ChiTaRS" id="Galt">
    <property type="organism name" value="mouse"/>
</dbReference>
<dbReference type="PRO" id="PR:Q03249"/>
<dbReference type="Proteomes" id="UP000000589">
    <property type="component" value="Unplaced"/>
</dbReference>
<dbReference type="RNAct" id="Q03249">
    <property type="molecule type" value="protein"/>
</dbReference>
<dbReference type="GO" id="GO:0008108">
    <property type="term" value="F:UDP-glucose:hexose-1-phosphate uridylyltransferase activity"/>
    <property type="evidence" value="ECO:0000314"/>
    <property type="project" value="MGI"/>
</dbReference>
<dbReference type="GO" id="GO:0008270">
    <property type="term" value="F:zinc ion binding"/>
    <property type="evidence" value="ECO:0000250"/>
    <property type="project" value="UniProtKB"/>
</dbReference>
<dbReference type="GO" id="GO:0033499">
    <property type="term" value="P:galactose catabolic process via UDP-galactose, Leloir pathway"/>
    <property type="evidence" value="ECO:0000315"/>
    <property type="project" value="MGI"/>
</dbReference>
<dbReference type="GO" id="GO:0006012">
    <property type="term" value="P:galactose metabolic process"/>
    <property type="evidence" value="ECO:0000315"/>
    <property type="project" value="MGI"/>
</dbReference>
<dbReference type="GO" id="GO:0061623">
    <property type="term" value="P:glycolytic process from galactose"/>
    <property type="evidence" value="ECO:0000315"/>
    <property type="project" value="MGI"/>
</dbReference>
<dbReference type="GO" id="GO:0006011">
    <property type="term" value="P:UDP-alpha-D-glucose metabolic process"/>
    <property type="evidence" value="ECO:0000250"/>
    <property type="project" value="UniProtKB"/>
</dbReference>
<dbReference type="CDD" id="cd00608">
    <property type="entry name" value="GalT"/>
    <property type="match status" value="1"/>
</dbReference>
<dbReference type="FunFam" id="3.30.428.10:FF:000001">
    <property type="entry name" value="Galactose-1-phosphate uridylyltransferase"/>
    <property type="match status" value="1"/>
</dbReference>
<dbReference type="FunFam" id="3.30.428.10:FF:000002">
    <property type="entry name" value="Galactose-1-phosphate uridylyltransferase"/>
    <property type="match status" value="1"/>
</dbReference>
<dbReference type="Gene3D" id="3.30.428.10">
    <property type="entry name" value="HIT-like"/>
    <property type="match status" value="2"/>
</dbReference>
<dbReference type="InterPro" id="IPR001937">
    <property type="entry name" value="GalP_UDPtransf1"/>
</dbReference>
<dbReference type="InterPro" id="IPR019779">
    <property type="entry name" value="GalP_UDPtransf1_His-AS"/>
</dbReference>
<dbReference type="InterPro" id="IPR005850">
    <property type="entry name" value="GalP_Utransf_C"/>
</dbReference>
<dbReference type="InterPro" id="IPR005849">
    <property type="entry name" value="GalP_Utransf_N"/>
</dbReference>
<dbReference type="InterPro" id="IPR036265">
    <property type="entry name" value="HIT-like_sf"/>
</dbReference>
<dbReference type="NCBIfam" id="TIGR00209">
    <property type="entry name" value="galT_1"/>
    <property type="match status" value="1"/>
</dbReference>
<dbReference type="NCBIfam" id="NF008724">
    <property type="entry name" value="PRK11720.1"/>
    <property type="match status" value="1"/>
</dbReference>
<dbReference type="PANTHER" id="PTHR11943">
    <property type="entry name" value="GALACTOSE-1-PHOSPHATE URIDYLYLTRANSFERASE"/>
    <property type="match status" value="1"/>
</dbReference>
<dbReference type="PANTHER" id="PTHR11943:SF1">
    <property type="entry name" value="GALACTOSE-1-PHOSPHATE URIDYLYLTRANSFERASE"/>
    <property type="match status" value="1"/>
</dbReference>
<dbReference type="Pfam" id="PF02744">
    <property type="entry name" value="GalP_UDP_tr_C"/>
    <property type="match status" value="1"/>
</dbReference>
<dbReference type="Pfam" id="PF01087">
    <property type="entry name" value="GalP_UDP_transf"/>
    <property type="match status" value="1"/>
</dbReference>
<dbReference type="PIRSF" id="PIRSF000808">
    <property type="entry name" value="GalT"/>
    <property type="match status" value="1"/>
</dbReference>
<dbReference type="SUPFAM" id="SSF54197">
    <property type="entry name" value="HIT-like"/>
    <property type="match status" value="2"/>
</dbReference>
<dbReference type="PROSITE" id="PS00117">
    <property type="entry name" value="GAL_P_UDP_TRANSF_I"/>
    <property type="match status" value="1"/>
</dbReference>
<protein>
    <recommendedName>
        <fullName>Galactose-1-phosphate uridylyltransferase</fullName>
        <shortName>Gal-1-P uridylyltransferase</shortName>
        <ecNumber evidence="1">2.7.7.12</ecNumber>
    </recommendedName>
    <alternativeName>
        <fullName>UDP-glucose--hexose-1-phosphate uridylyltransferase</fullName>
    </alternativeName>
</protein>
<keyword id="KW-0119">Carbohydrate metabolism</keyword>
<keyword id="KW-0299">Galactose metabolism</keyword>
<keyword id="KW-0479">Metal-binding</keyword>
<keyword id="KW-0548">Nucleotidyltransferase</keyword>
<keyword id="KW-1185">Reference proteome</keyword>
<keyword id="KW-0808">Transferase</keyword>
<keyword id="KW-0862">Zinc</keyword>
<accession>Q03249</accession>
<accession>Q91VQ7</accession>
<comment type="function">
    <text evidence="1">Plays an important role in galactose metabolism.</text>
</comment>
<comment type="catalytic activity">
    <reaction evidence="1">
        <text>alpha-D-galactose 1-phosphate + UDP-alpha-D-glucose = alpha-D-glucose 1-phosphate + UDP-alpha-D-galactose</text>
        <dbReference type="Rhea" id="RHEA:13989"/>
        <dbReference type="ChEBI" id="CHEBI:58336"/>
        <dbReference type="ChEBI" id="CHEBI:58601"/>
        <dbReference type="ChEBI" id="CHEBI:58885"/>
        <dbReference type="ChEBI" id="CHEBI:66914"/>
        <dbReference type="EC" id="2.7.7.12"/>
    </reaction>
</comment>
<comment type="cofactor">
    <cofactor evidence="1">
        <name>Zn(2+)</name>
        <dbReference type="ChEBI" id="CHEBI:29105"/>
    </cofactor>
    <text evidence="1">Binds 2 zinc ions per subunit.</text>
</comment>
<comment type="pathway">
    <text evidence="1">Carbohydrate metabolism; galactose metabolism.</text>
</comment>
<comment type="subunit">
    <text evidence="1">Homodimer.</text>
</comment>
<comment type="similarity">
    <text evidence="4">Belongs to the galactose-1-phosphate uridylyltransferase type 1 family.</text>
</comment>
<comment type="sequence caution" evidence="4">
    <conflict type="frameshift">
        <sequence resource="EMBL-CDS" id="AAA37658"/>
    </conflict>
</comment>
<comment type="sequence caution" evidence="4">
    <conflict type="erroneous initiation">
        <sequence resource="EMBL-CDS" id="AAA83562"/>
    </conflict>
</comment>
<comment type="sequence caution" evidence="4">
    <conflict type="erroneous initiation">
        <sequence resource="EMBL-CDS" id="AAH10985"/>
    </conflict>
</comment>